<accession>B8J826</accession>
<organism>
    <name type="scientific">Anaeromyxobacter dehalogenans (strain 2CP-1 / ATCC BAA-258)</name>
    <dbReference type="NCBI Taxonomy" id="455488"/>
    <lineage>
        <taxon>Bacteria</taxon>
        <taxon>Pseudomonadati</taxon>
        <taxon>Myxococcota</taxon>
        <taxon>Myxococcia</taxon>
        <taxon>Myxococcales</taxon>
        <taxon>Cystobacterineae</taxon>
        <taxon>Anaeromyxobacteraceae</taxon>
        <taxon>Anaeromyxobacter</taxon>
    </lineage>
</organism>
<protein>
    <recommendedName>
        <fullName evidence="1">3-isopropylmalate dehydratase small subunit</fullName>
        <ecNumber evidence="1">4.2.1.33</ecNumber>
    </recommendedName>
    <alternativeName>
        <fullName evidence="1">Alpha-IPM isomerase</fullName>
        <shortName evidence="1">IPMI</shortName>
    </alternativeName>
    <alternativeName>
        <fullName evidence="1">Isopropylmalate isomerase</fullName>
    </alternativeName>
</protein>
<proteinExistence type="inferred from homology"/>
<sequence length="191" mass="20487">MEPIRVIESRTVVLPRENVDTDQIIPARFLKVTDKKGLGKALFSDWRYAADGAPRPDFVMNRPEAQGCSILVAGDNFGCGSSREHAPWALVDAGVRAVISTRIADIFRNNALKNGLVPVVLDAASHAKLLAAPGASVRVDVEAQTVTLPDGSTAQFPLDGFARYCLLNGVDELGFLLAQEADIAAFEGGRR</sequence>
<feature type="chain" id="PRO_1000149397" description="3-isopropylmalate dehydratase small subunit">
    <location>
        <begin position="1"/>
        <end position="191"/>
    </location>
</feature>
<reference key="1">
    <citation type="submission" date="2009-01" db="EMBL/GenBank/DDBJ databases">
        <title>Complete sequence of Anaeromyxobacter dehalogenans 2CP-1.</title>
        <authorList>
            <person name="Lucas S."/>
            <person name="Copeland A."/>
            <person name="Lapidus A."/>
            <person name="Glavina del Rio T."/>
            <person name="Dalin E."/>
            <person name="Tice H."/>
            <person name="Bruce D."/>
            <person name="Goodwin L."/>
            <person name="Pitluck S."/>
            <person name="Saunders E."/>
            <person name="Brettin T."/>
            <person name="Detter J.C."/>
            <person name="Han C."/>
            <person name="Larimer F."/>
            <person name="Land M."/>
            <person name="Hauser L."/>
            <person name="Kyrpides N."/>
            <person name="Ovchinnikova G."/>
            <person name="Beliaev A.S."/>
            <person name="Richardson P."/>
        </authorList>
    </citation>
    <scope>NUCLEOTIDE SEQUENCE [LARGE SCALE GENOMIC DNA]</scope>
    <source>
        <strain>2CP-1 / ATCC BAA-258</strain>
    </source>
</reference>
<name>LEUD_ANAD2</name>
<keyword id="KW-0028">Amino-acid biosynthesis</keyword>
<keyword id="KW-0100">Branched-chain amino acid biosynthesis</keyword>
<keyword id="KW-0432">Leucine biosynthesis</keyword>
<keyword id="KW-0456">Lyase</keyword>
<comment type="function">
    <text evidence="1">Catalyzes the isomerization between 2-isopropylmalate and 3-isopropylmalate, via the formation of 2-isopropylmaleate.</text>
</comment>
<comment type="catalytic activity">
    <reaction evidence="1">
        <text>(2R,3S)-3-isopropylmalate = (2S)-2-isopropylmalate</text>
        <dbReference type="Rhea" id="RHEA:32287"/>
        <dbReference type="ChEBI" id="CHEBI:1178"/>
        <dbReference type="ChEBI" id="CHEBI:35121"/>
        <dbReference type="EC" id="4.2.1.33"/>
    </reaction>
</comment>
<comment type="pathway">
    <text evidence="1">Amino-acid biosynthesis; L-leucine biosynthesis; L-leucine from 3-methyl-2-oxobutanoate: step 2/4.</text>
</comment>
<comment type="subunit">
    <text evidence="1">Heterodimer of LeuC and LeuD.</text>
</comment>
<comment type="similarity">
    <text evidence="1">Belongs to the LeuD family. LeuD type 1 subfamily.</text>
</comment>
<dbReference type="EC" id="4.2.1.33" evidence="1"/>
<dbReference type="EMBL" id="CP001359">
    <property type="protein sequence ID" value="ACL65325.1"/>
    <property type="molecule type" value="Genomic_DNA"/>
</dbReference>
<dbReference type="RefSeq" id="WP_012633225.1">
    <property type="nucleotide sequence ID" value="NC_011891.1"/>
</dbReference>
<dbReference type="SMR" id="B8J826"/>
<dbReference type="KEGG" id="acp:A2cp1_1984"/>
<dbReference type="HOGENOM" id="CLU_081378_0_3_7"/>
<dbReference type="UniPathway" id="UPA00048">
    <property type="reaction ID" value="UER00071"/>
</dbReference>
<dbReference type="Proteomes" id="UP000007089">
    <property type="component" value="Chromosome"/>
</dbReference>
<dbReference type="GO" id="GO:0009316">
    <property type="term" value="C:3-isopropylmalate dehydratase complex"/>
    <property type="evidence" value="ECO:0007669"/>
    <property type="project" value="InterPro"/>
</dbReference>
<dbReference type="GO" id="GO:0003861">
    <property type="term" value="F:3-isopropylmalate dehydratase activity"/>
    <property type="evidence" value="ECO:0007669"/>
    <property type="project" value="UniProtKB-UniRule"/>
</dbReference>
<dbReference type="GO" id="GO:0009098">
    <property type="term" value="P:L-leucine biosynthetic process"/>
    <property type="evidence" value="ECO:0007669"/>
    <property type="project" value="UniProtKB-UniRule"/>
</dbReference>
<dbReference type="CDD" id="cd01577">
    <property type="entry name" value="IPMI_Swivel"/>
    <property type="match status" value="1"/>
</dbReference>
<dbReference type="FunFam" id="3.20.19.10:FF:000003">
    <property type="entry name" value="3-isopropylmalate dehydratase small subunit"/>
    <property type="match status" value="1"/>
</dbReference>
<dbReference type="Gene3D" id="3.20.19.10">
    <property type="entry name" value="Aconitase, domain 4"/>
    <property type="match status" value="1"/>
</dbReference>
<dbReference type="HAMAP" id="MF_01031">
    <property type="entry name" value="LeuD_type1"/>
    <property type="match status" value="1"/>
</dbReference>
<dbReference type="InterPro" id="IPR004431">
    <property type="entry name" value="3-IsopropMal_deHydase_ssu"/>
</dbReference>
<dbReference type="InterPro" id="IPR015928">
    <property type="entry name" value="Aconitase/3IPM_dehydase_swvl"/>
</dbReference>
<dbReference type="InterPro" id="IPR000573">
    <property type="entry name" value="AconitaseA/IPMdHydase_ssu_swvl"/>
</dbReference>
<dbReference type="InterPro" id="IPR033940">
    <property type="entry name" value="IPMI_Swivel"/>
</dbReference>
<dbReference type="InterPro" id="IPR050075">
    <property type="entry name" value="LeuD"/>
</dbReference>
<dbReference type="NCBIfam" id="TIGR00171">
    <property type="entry name" value="leuD"/>
    <property type="match status" value="1"/>
</dbReference>
<dbReference type="NCBIfam" id="NF002458">
    <property type="entry name" value="PRK01641.1"/>
    <property type="match status" value="1"/>
</dbReference>
<dbReference type="PANTHER" id="PTHR43345:SF5">
    <property type="entry name" value="3-ISOPROPYLMALATE DEHYDRATASE SMALL SUBUNIT"/>
    <property type="match status" value="1"/>
</dbReference>
<dbReference type="PANTHER" id="PTHR43345">
    <property type="entry name" value="3-ISOPROPYLMALATE DEHYDRATASE SMALL SUBUNIT 2-RELATED-RELATED"/>
    <property type="match status" value="1"/>
</dbReference>
<dbReference type="Pfam" id="PF00694">
    <property type="entry name" value="Aconitase_C"/>
    <property type="match status" value="1"/>
</dbReference>
<dbReference type="SUPFAM" id="SSF52016">
    <property type="entry name" value="LeuD/IlvD-like"/>
    <property type="match status" value="1"/>
</dbReference>
<evidence type="ECO:0000255" key="1">
    <source>
        <dbReference type="HAMAP-Rule" id="MF_01031"/>
    </source>
</evidence>
<gene>
    <name evidence="1" type="primary">leuD</name>
    <name type="ordered locus">A2cp1_1984</name>
</gene>